<comment type="function">
    <text evidence="1">Catalyzes the attachment of alanine to tRNA(Ala) in a two-step reaction: alanine is first activated by ATP to form Ala-AMP and then transferred to the acceptor end of tRNA(Ala). Also edits incorrectly charged Ser-tRNA(Ala) and Gly-tRNA(Ala) via its editing domain.</text>
</comment>
<comment type="catalytic activity">
    <reaction evidence="1">
        <text>tRNA(Ala) + L-alanine + ATP = L-alanyl-tRNA(Ala) + AMP + diphosphate</text>
        <dbReference type="Rhea" id="RHEA:12540"/>
        <dbReference type="Rhea" id="RHEA-COMP:9657"/>
        <dbReference type="Rhea" id="RHEA-COMP:9923"/>
        <dbReference type="ChEBI" id="CHEBI:30616"/>
        <dbReference type="ChEBI" id="CHEBI:33019"/>
        <dbReference type="ChEBI" id="CHEBI:57972"/>
        <dbReference type="ChEBI" id="CHEBI:78442"/>
        <dbReference type="ChEBI" id="CHEBI:78497"/>
        <dbReference type="ChEBI" id="CHEBI:456215"/>
        <dbReference type="EC" id="6.1.1.7"/>
    </reaction>
</comment>
<comment type="cofactor">
    <cofactor evidence="1">
        <name>Zn(2+)</name>
        <dbReference type="ChEBI" id="CHEBI:29105"/>
    </cofactor>
    <text evidence="1">Binds 1 zinc ion per subunit.</text>
</comment>
<comment type="subcellular location">
    <subcellularLocation>
        <location evidence="1">Cytoplasm</location>
    </subcellularLocation>
</comment>
<comment type="domain">
    <text evidence="1">Consists of three domains; the N-terminal catalytic domain, the editing domain and the C-terminal C-Ala domain. The editing domain removes incorrectly charged amino acids, while the C-Ala domain, along with tRNA(Ala), serves as a bridge to cooperatively bring together the editing and aminoacylation centers thus stimulating deacylation of misacylated tRNAs.</text>
</comment>
<comment type="similarity">
    <text evidence="1">Belongs to the class-II aminoacyl-tRNA synthetase family.</text>
</comment>
<sequence length="873" mass="94983">MKSSEIRQKFLQFFQSKGHSIVPSSSLVPGNDPTLLFTNSGMVQFKDVFTGKEKRPYTRATSSQRSVRAGGKHNDLENVGYTARHHTFFEMLGNFSFGDYFKQDAIRFAWELLTTVYKLPVEKLWVTVYQEDDEAYDIWAKEVGVPTERIIRIGDNKGARYASDNFWQMGDTGPCGPCTEIFYDHGPDIWGGPPGSPEEDGDRYIEIWNLVFMQFERDAAGNMTPLPKPCVDTGMGLERIAAVLQGVHSNYEIDLFQKLITAAARETGVQDLHDNSLKVIADHIRACSFLIVDGVIPSNEGRGYVLRRIVRRALRHGYKLGQTKPFFYRLVPDLVAQMGEAYPELANMAERVGQVLKQEEERFGETLEHGMKILDVALAQVPKGGLLDGNTLFTLYDTYGFPVDLTADICREREVEIDMAGFEAAMERQRDQARAAGKFKMAEGLNYEGAQTRFEGYEQLELSGAKVTALYVDGTQTDQVRAGQQAVVVLDATPFYAESGGQVGDTGLLVADGLRFAVADTLKVQAGVFGHHGLLEEGVLKVGDTLLARVDAVRRARTVRNHSATHLMHKALREVLGAHVQQRGSLVDPDKTRFDFAHDAPMTAEQIARVEAIVNAEVLANQAAQARVMAYDDAVKGGAMALFGEKYGDTVRVLDIGFSRELCGGTHVSRTGDIGLFKIVSEGGVAAGVRRVEAITGDNALVWVQEQNALLQRAAGVLRSPVAELPERIAQVQDQVKALEKDLEQARAKLAASAGNDLADKSAVEIKGVKVLAAVINDVDPKALRGMVDNLKDKLKPAIVLLAASADGKISLVGGVTADQTAKVKAGDLVGFVAAQVGGKGGGRPDMAMGGGTDVAALPAAIASVQDWVNERL</sequence>
<proteinExistence type="inferred from homology"/>
<keyword id="KW-0030">Aminoacyl-tRNA synthetase</keyword>
<keyword id="KW-0067">ATP-binding</keyword>
<keyword id="KW-0963">Cytoplasm</keyword>
<keyword id="KW-0436">Ligase</keyword>
<keyword id="KW-0479">Metal-binding</keyword>
<keyword id="KW-0547">Nucleotide-binding</keyword>
<keyword id="KW-0648">Protein biosynthesis</keyword>
<keyword id="KW-1185">Reference proteome</keyword>
<keyword id="KW-0694">RNA-binding</keyword>
<keyword id="KW-0820">tRNA-binding</keyword>
<keyword id="KW-0862">Zinc</keyword>
<feature type="chain" id="PRO_0000347508" description="Alanine--tRNA ligase">
    <location>
        <begin position="1"/>
        <end position="873"/>
    </location>
</feature>
<feature type="binding site" evidence="1">
    <location>
        <position position="562"/>
    </location>
    <ligand>
        <name>Zn(2+)</name>
        <dbReference type="ChEBI" id="CHEBI:29105"/>
    </ligand>
</feature>
<feature type="binding site" evidence="1">
    <location>
        <position position="566"/>
    </location>
    <ligand>
        <name>Zn(2+)</name>
        <dbReference type="ChEBI" id="CHEBI:29105"/>
    </ligand>
</feature>
<feature type="binding site" evidence="1">
    <location>
        <position position="663"/>
    </location>
    <ligand>
        <name>Zn(2+)</name>
        <dbReference type="ChEBI" id="CHEBI:29105"/>
    </ligand>
</feature>
<feature type="binding site" evidence="1">
    <location>
        <position position="667"/>
    </location>
    <ligand>
        <name>Zn(2+)</name>
        <dbReference type="ChEBI" id="CHEBI:29105"/>
    </ligand>
</feature>
<name>SYA_BORA1</name>
<accession>Q2KY72</accession>
<reference key="1">
    <citation type="journal article" date="2006" name="J. Bacteriol.">
        <title>Comparison of the genome sequence of the poultry pathogen Bordetella avium with those of B. bronchiseptica, B. pertussis, and B. parapertussis reveals extensive diversity in surface structures associated with host interaction.</title>
        <authorList>
            <person name="Sebaihia M."/>
            <person name="Preston A."/>
            <person name="Maskell D.J."/>
            <person name="Kuzmiak H."/>
            <person name="Connell T.D."/>
            <person name="King N.D."/>
            <person name="Orndorff P.E."/>
            <person name="Miyamoto D.M."/>
            <person name="Thomson N.R."/>
            <person name="Harris D."/>
            <person name="Goble A."/>
            <person name="Lord A."/>
            <person name="Murphy L."/>
            <person name="Quail M.A."/>
            <person name="Rutter S."/>
            <person name="Squares R."/>
            <person name="Squares S."/>
            <person name="Woodward J."/>
            <person name="Parkhill J."/>
            <person name="Temple L.M."/>
        </authorList>
    </citation>
    <scope>NUCLEOTIDE SEQUENCE [LARGE SCALE GENOMIC DNA]</scope>
    <source>
        <strain>197N</strain>
    </source>
</reference>
<evidence type="ECO:0000255" key="1">
    <source>
        <dbReference type="HAMAP-Rule" id="MF_00036"/>
    </source>
</evidence>
<protein>
    <recommendedName>
        <fullName evidence="1">Alanine--tRNA ligase</fullName>
        <ecNumber evidence="1">6.1.1.7</ecNumber>
    </recommendedName>
    <alternativeName>
        <fullName evidence="1">Alanyl-tRNA synthetase</fullName>
        <shortName evidence="1">AlaRS</shortName>
    </alternativeName>
</protein>
<dbReference type="EC" id="6.1.1.7" evidence="1"/>
<dbReference type="EMBL" id="AM167904">
    <property type="protein sequence ID" value="CAJ49966.1"/>
    <property type="molecule type" value="Genomic_DNA"/>
</dbReference>
<dbReference type="RefSeq" id="WP_012418017.1">
    <property type="nucleotide sequence ID" value="NC_010645.1"/>
</dbReference>
<dbReference type="SMR" id="Q2KY72"/>
<dbReference type="STRING" id="360910.BAV2356"/>
<dbReference type="GeneID" id="92934469"/>
<dbReference type="KEGG" id="bav:BAV2356"/>
<dbReference type="eggNOG" id="COG0013">
    <property type="taxonomic scope" value="Bacteria"/>
</dbReference>
<dbReference type="HOGENOM" id="CLU_004485_1_1_4"/>
<dbReference type="OrthoDB" id="9803884at2"/>
<dbReference type="Proteomes" id="UP000001977">
    <property type="component" value="Chromosome"/>
</dbReference>
<dbReference type="GO" id="GO:0005829">
    <property type="term" value="C:cytosol"/>
    <property type="evidence" value="ECO:0007669"/>
    <property type="project" value="TreeGrafter"/>
</dbReference>
<dbReference type="GO" id="GO:0004813">
    <property type="term" value="F:alanine-tRNA ligase activity"/>
    <property type="evidence" value="ECO:0007669"/>
    <property type="project" value="UniProtKB-UniRule"/>
</dbReference>
<dbReference type="GO" id="GO:0002161">
    <property type="term" value="F:aminoacyl-tRNA deacylase activity"/>
    <property type="evidence" value="ECO:0007669"/>
    <property type="project" value="TreeGrafter"/>
</dbReference>
<dbReference type="GO" id="GO:0005524">
    <property type="term" value="F:ATP binding"/>
    <property type="evidence" value="ECO:0007669"/>
    <property type="project" value="UniProtKB-UniRule"/>
</dbReference>
<dbReference type="GO" id="GO:0000049">
    <property type="term" value="F:tRNA binding"/>
    <property type="evidence" value="ECO:0007669"/>
    <property type="project" value="UniProtKB-KW"/>
</dbReference>
<dbReference type="GO" id="GO:0008270">
    <property type="term" value="F:zinc ion binding"/>
    <property type="evidence" value="ECO:0007669"/>
    <property type="project" value="UniProtKB-UniRule"/>
</dbReference>
<dbReference type="GO" id="GO:0006419">
    <property type="term" value="P:alanyl-tRNA aminoacylation"/>
    <property type="evidence" value="ECO:0007669"/>
    <property type="project" value="UniProtKB-UniRule"/>
</dbReference>
<dbReference type="GO" id="GO:0045892">
    <property type="term" value="P:negative regulation of DNA-templated transcription"/>
    <property type="evidence" value="ECO:0007669"/>
    <property type="project" value="TreeGrafter"/>
</dbReference>
<dbReference type="CDD" id="cd00673">
    <property type="entry name" value="AlaRS_core"/>
    <property type="match status" value="1"/>
</dbReference>
<dbReference type="FunFam" id="2.40.30.130:FF:000001">
    <property type="entry name" value="Alanine--tRNA ligase"/>
    <property type="match status" value="1"/>
</dbReference>
<dbReference type="FunFam" id="3.10.310.40:FF:000001">
    <property type="entry name" value="Alanine--tRNA ligase"/>
    <property type="match status" value="1"/>
</dbReference>
<dbReference type="FunFam" id="3.30.54.20:FF:000001">
    <property type="entry name" value="Alanine--tRNA ligase"/>
    <property type="match status" value="1"/>
</dbReference>
<dbReference type="FunFam" id="3.30.930.10:FF:000004">
    <property type="entry name" value="Alanine--tRNA ligase"/>
    <property type="match status" value="1"/>
</dbReference>
<dbReference type="FunFam" id="3.30.980.10:FF:000004">
    <property type="entry name" value="Alanine--tRNA ligase, cytoplasmic"/>
    <property type="match status" value="1"/>
</dbReference>
<dbReference type="Gene3D" id="2.40.30.130">
    <property type="match status" value="1"/>
</dbReference>
<dbReference type="Gene3D" id="3.10.310.40">
    <property type="match status" value="1"/>
</dbReference>
<dbReference type="Gene3D" id="3.30.54.20">
    <property type="match status" value="1"/>
</dbReference>
<dbReference type="Gene3D" id="6.10.250.550">
    <property type="match status" value="1"/>
</dbReference>
<dbReference type="Gene3D" id="3.30.930.10">
    <property type="entry name" value="Bira Bifunctional Protein, Domain 2"/>
    <property type="match status" value="1"/>
</dbReference>
<dbReference type="Gene3D" id="3.30.980.10">
    <property type="entry name" value="Threonyl-trna Synthetase, Chain A, domain 2"/>
    <property type="match status" value="1"/>
</dbReference>
<dbReference type="HAMAP" id="MF_00036_B">
    <property type="entry name" value="Ala_tRNA_synth_B"/>
    <property type="match status" value="1"/>
</dbReference>
<dbReference type="InterPro" id="IPR045864">
    <property type="entry name" value="aa-tRNA-synth_II/BPL/LPL"/>
</dbReference>
<dbReference type="InterPro" id="IPR002318">
    <property type="entry name" value="Ala-tRNA-lgiase_IIc"/>
</dbReference>
<dbReference type="InterPro" id="IPR018162">
    <property type="entry name" value="Ala-tRNA-ligase_IIc_anticod-bd"/>
</dbReference>
<dbReference type="InterPro" id="IPR018165">
    <property type="entry name" value="Ala-tRNA-synth_IIc_core"/>
</dbReference>
<dbReference type="InterPro" id="IPR018164">
    <property type="entry name" value="Ala-tRNA-synth_IIc_N"/>
</dbReference>
<dbReference type="InterPro" id="IPR050058">
    <property type="entry name" value="Ala-tRNA_ligase"/>
</dbReference>
<dbReference type="InterPro" id="IPR023033">
    <property type="entry name" value="Ala_tRNA_ligase_euk/bac"/>
</dbReference>
<dbReference type="InterPro" id="IPR003156">
    <property type="entry name" value="DHHA1_dom"/>
</dbReference>
<dbReference type="InterPro" id="IPR018163">
    <property type="entry name" value="Thr/Ala-tRNA-synth_IIc_edit"/>
</dbReference>
<dbReference type="InterPro" id="IPR009000">
    <property type="entry name" value="Transl_B-barrel_sf"/>
</dbReference>
<dbReference type="InterPro" id="IPR012947">
    <property type="entry name" value="tRNA_SAD"/>
</dbReference>
<dbReference type="NCBIfam" id="TIGR00344">
    <property type="entry name" value="alaS"/>
    <property type="match status" value="1"/>
</dbReference>
<dbReference type="PANTHER" id="PTHR11777:SF9">
    <property type="entry name" value="ALANINE--TRNA LIGASE, CYTOPLASMIC"/>
    <property type="match status" value="1"/>
</dbReference>
<dbReference type="PANTHER" id="PTHR11777">
    <property type="entry name" value="ALANYL-TRNA SYNTHETASE"/>
    <property type="match status" value="1"/>
</dbReference>
<dbReference type="Pfam" id="PF02272">
    <property type="entry name" value="DHHA1"/>
    <property type="match status" value="1"/>
</dbReference>
<dbReference type="Pfam" id="PF01411">
    <property type="entry name" value="tRNA-synt_2c"/>
    <property type="match status" value="1"/>
</dbReference>
<dbReference type="Pfam" id="PF07973">
    <property type="entry name" value="tRNA_SAD"/>
    <property type="match status" value="1"/>
</dbReference>
<dbReference type="PRINTS" id="PR00980">
    <property type="entry name" value="TRNASYNTHALA"/>
</dbReference>
<dbReference type="SMART" id="SM00863">
    <property type="entry name" value="tRNA_SAD"/>
    <property type="match status" value="1"/>
</dbReference>
<dbReference type="SUPFAM" id="SSF55681">
    <property type="entry name" value="Class II aaRS and biotin synthetases"/>
    <property type="match status" value="1"/>
</dbReference>
<dbReference type="SUPFAM" id="SSF101353">
    <property type="entry name" value="Putative anticodon-binding domain of alanyl-tRNA synthetase (AlaRS)"/>
    <property type="match status" value="1"/>
</dbReference>
<dbReference type="SUPFAM" id="SSF55186">
    <property type="entry name" value="ThrRS/AlaRS common domain"/>
    <property type="match status" value="1"/>
</dbReference>
<dbReference type="SUPFAM" id="SSF50447">
    <property type="entry name" value="Translation proteins"/>
    <property type="match status" value="1"/>
</dbReference>
<dbReference type="PROSITE" id="PS50860">
    <property type="entry name" value="AA_TRNA_LIGASE_II_ALA"/>
    <property type="match status" value="1"/>
</dbReference>
<gene>
    <name evidence="1" type="primary">alaS</name>
    <name type="ordered locus">BAV2356</name>
</gene>
<organism>
    <name type="scientific">Bordetella avium (strain 197N)</name>
    <dbReference type="NCBI Taxonomy" id="360910"/>
    <lineage>
        <taxon>Bacteria</taxon>
        <taxon>Pseudomonadati</taxon>
        <taxon>Pseudomonadota</taxon>
        <taxon>Betaproteobacteria</taxon>
        <taxon>Burkholderiales</taxon>
        <taxon>Alcaligenaceae</taxon>
        <taxon>Bordetella</taxon>
    </lineage>
</organism>